<organism>
    <name type="scientific">Hendra virus (isolate Horse/Autralia/Hendra/1994)</name>
    <dbReference type="NCBI Taxonomy" id="928303"/>
    <lineage>
        <taxon>Viruses</taxon>
        <taxon>Riboviria</taxon>
        <taxon>Orthornavirae</taxon>
        <taxon>Negarnaviricota</taxon>
        <taxon>Haploviricotina</taxon>
        <taxon>Monjiviricetes</taxon>
        <taxon>Mononegavirales</taxon>
        <taxon>Paramyxoviridae</taxon>
        <taxon>Orthoparamyxovirinae</taxon>
        <taxon>Henipavirus</taxon>
        <taxon>Henipavirus hendraense</taxon>
    </lineage>
</organism>
<sequence>MSDIFDEAASFRSYQSKLGRDGRASAATATLTTKIRIFVPATNSPELRWELTLFALDVIRSPSAAESMKIGAAFTLISMYSERPGALIRSLLNDPDIEAVIIDVGSMLNGIPVMERRGDKAQEEMEGLMRILKTARESSKGKTPFVDSRAYGLRITDMSTLVSAVITIEAQIWILIAKAVTAPDTAEESETRRWAKYVQQKRVNPFFALTQQWLTEMRNLLSQSLSVRKFMVEILMEVKKGGSAKGRAVEIISDIGNYVEETGMAGFFATIRFGLETRYPALALNEFQSDLNTIKGLMLLYREIGPRAPYMVLLEESIQTKFAPGGYPLLWSFAMGVATTIDRSMGALNINRGYLEPMYFRLGQKSARHHAGGIDQNMANKLGLNSDQVAELAAAVQETSVGRQDNNMQAREAKFAAGGVLVGGGEQDIDEEEEPIEHSGRQSVTFKREMSMSSLADSVPSSSVSTSGGTRLTNSLLNLRSRLAAKAIKESTAQSSSERNPPNNRPQADSGRKDDQEPKPAQNDLDFVRADV</sequence>
<proteinExistence type="evidence at protein level"/>
<keyword id="KW-0002">3D-structure</keyword>
<keyword id="KW-0167">Capsid protein</keyword>
<keyword id="KW-1139">Helical capsid protein</keyword>
<keyword id="KW-1035">Host cytoplasm</keyword>
<keyword id="KW-1185">Reference proteome</keyword>
<keyword id="KW-0687">Ribonucleoprotein</keyword>
<keyword id="KW-0694">RNA-binding</keyword>
<keyword id="KW-0543">Viral nucleoprotein</keyword>
<keyword id="KW-0946">Virion</keyword>
<feature type="chain" id="PRO_0000235998" description="Nucleoprotein">
    <location>
        <begin position="1"/>
        <end position="532"/>
    </location>
</feature>
<feature type="region of interest" description="Ncore" evidence="3">
    <location>
        <begin position="1"/>
        <end position="402"/>
    </location>
</feature>
<feature type="region of interest" description="Ntail" evidence="3">
    <location>
        <begin position="403"/>
        <end position="532"/>
    </location>
</feature>
<feature type="region of interest" description="Disordered" evidence="5">
    <location>
        <begin position="425"/>
        <end position="444"/>
    </location>
</feature>
<feature type="region of interest" description="Disordered" evidence="5">
    <location>
        <begin position="449"/>
        <end position="471"/>
    </location>
</feature>
<feature type="region of interest" description="Disordered" evidence="5">
    <location>
        <begin position="487"/>
        <end position="532"/>
    </location>
</feature>
<feature type="compositionally biased region" description="Low complexity" evidence="5">
    <location>
        <begin position="451"/>
        <end position="471"/>
    </location>
</feature>
<feature type="compositionally biased region" description="Polar residues" evidence="5">
    <location>
        <begin position="491"/>
        <end position="507"/>
    </location>
</feature>
<feature type="binding site" evidence="2">
    <location>
        <position position="178"/>
    </location>
    <ligand>
        <name>RNA</name>
        <dbReference type="ChEBI" id="CHEBI:33697"/>
    </ligand>
</feature>
<feature type="binding site" evidence="2">
    <location>
        <position position="193"/>
    </location>
    <ligand>
        <name>RNA</name>
        <dbReference type="ChEBI" id="CHEBI:33697"/>
    </ligand>
</feature>
<feature type="binding site" evidence="2">
    <location>
        <position position="258"/>
    </location>
    <ligand>
        <name>RNA</name>
        <dbReference type="ChEBI" id="CHEBI:33697"/>
    </ligand>
</feature>
<feature type="binding site" evidence="2">
    <location>
        <position position="352"/>
    </location>
    <ligand>
        <name>RNA</name>
        <dbReference type="ChEBI" id="CHEBI:33697"/>
    </ligand>
</feature>
<name>NCAP_HENDH</name>
<organismHost>
    <name type="scientific">Equus caballus</name>
    <name type="common">Horse</name>
    <dbReference type="NCBI Taxonomy" id="9796"/>
</organismHost>
<organismHost>
    <name type="scientific">Homo sapiens</name>
    <name type="common">Human</name>
    <dbReference type="NCBI Taxonomy" id="9606"/>
</organismHost>
<organismHost>
    <name type="scientific">Pteropus alecto</name>
    <name type="common">Black flying fox</name>
    <dbReference type="NCBI Taxonomy" id="9402"/>
</organismHost>
<organismHost>
    <name type="scientific">Pteropus poliocephalus</name>
    <name type="common">Grey-headed flying fox</name>
    <dbReference type="NCBI Taxonomy" id="9403"/>
</organismHost>
<organismHost>
    <name type="scientific">Pteropus scapulatus</name>
    <name type="common">Little red flying fox</name>
    <dbReference type="NCBI Taxonomy" id="94117"/>
</organismHost>
<comment type="function">
    <text evidence="3 6">Forms the helical nucleocapsid (NC) in a ratio of 1 N per 6 ribonucleotides, protecting the genome from nucleases (Probable). The encapsidated genomic RNA serves as template for transcription and replication; encapsidation by N is coupled to RNA synthesis (By similarity). Forms the encapsidation complex with the phosphoprotein protein P (By similarity). Before encapsidation, the newly synthesized free N protein, so-called N0, is chaperoned by P (By similarity).</text>
</comment>
<comment type="subunit">
    <text evidence="2 3 4">Homomultimer; forms the nucleocapsid (By similarity). Binds to the viral genomic RNA (By similarity). N0 interacts with the phosphoprotein (via N-terminus); this interaction allows P to chaperon N0 to avoid N polymerization before encapsidation (By similarity). Interacts as N-RNA template with the phosphoprotein (via C-terminus); this interaction positions the polymerase on the template (By similarity).</text>
</comment>
<comment type="subcellular location">
    <subcellularLocation>
        <location>Virion</location>
    </subcellularLocation>
    <subcellularLocation>
        <location evidence="1">Host cytoplasm</location>
    </subcellularLocation>
</comment>
<comment type="domain">
    <text evidence="3">Ncore is globular and carries the regions required for self-assembly and RNA-binding. Ntail is an intrinsically disordered monomeric domain in the C-terminus.</text>
</comment>
<comment type="similarity">
    <text evidence="6">Belongs to the paramyxoviruses nucleocapsid family.</text>
</comment>
<dbReference type="EMBL" id="AF017149">
    <property type="protein sequence ID" value="AAC83187.1"/>
    <property type="molecule type" value="Genomic_RNA"/>
</dbReference>
<dbReference type="PIR" id="T08205">
    <property type="entry name" value="T08205"/>
</dbReference>
<dbReference type="PDB" id="8C4H">
    <property type="method" value="EM"/>
    <property type="resolution" value="3.48 A"/>
    <property type="chains" value="A/B/C/D/E/F/G/H/I/J/K/L/M/N/a/b/c/d/e/f/g/h/i/j/k/l/m/n=1-532"/>
</dbReference>
<dbReference type="PDBsum" id="8C4H"/>
<dbReference type="SMR" id="O89339"/>
<dbReference type="IntAct" id="O89339">
    <property type="interactions" value="1"/>
</dbReference>
<dbReference type="KEGG" id="vg:1446470"/>
<dbReference type="Proteomes" id="UP000008771">
    <property type="component" value="Segment"/>
</dbReference>
<dbReference type="GO" id="GO:0019029">
    <property type="term" value="C:helical viral capsid"/>
    <property type="evidence" value="ECO:0007669"/>
    <property type="project" value="UniProtKB-KW"/>
</dbReference>
<dbReference type="GO" id="GO:0030430">
    <property type="term" value="C:host cell cytoplasm"/>
    <property type="evidence" value="ECO:0007669"/>
    <property type="project" value="UniProtKB-SubCell"/>
</dbReference>
<dbReference type="GO" id="GO:0032991">
    <property type="term" value="C:protein-containing complex"/>
    <property type="evidence" value="ECO:0000314"/>
    <property type="project" value="CAFA"/>
</dbReference>
<dbReference type="GO" id="GO:1990904">
    <property type="term" value="C:ribonucleoprotein complex"/>
    <property type="evidence" value="ECO:0007669"/>
    <property type="project" value="UniProtKB-KW"/>
</dbReference>
<dbReference type="GO" id="GO:0019013">
    <property type="term" value="C:viral nucleocapsid"/>
    <property type="evidence" value="ECO:0007669"/>
    <property type="project" value="UniProtKB-KW"/>
</dbReference>
<dbReference type="GO" id="GO:0097718">
    <property type="term" value="F:disordered domain specific binding"/>
    <property type="evidence" value="ECO:0000353"/>
    <property type="project" value="CAFA"/>
</dbReference>
<dbReference type="GO" id="GO:0060090">
    <property type="term" value="F:molecular adaptor activity"/>
    <property type="evidence" value="ECO:0000269"/>
    <property type="project" value="DisProt"/>
</dbReference>
<dbReference type="GO" id="GO:0003723">
    <property type="term" value="F:RNA binding"/>
    <property type="evidence" value="ECO:0007669"/>
    <property type="project" value="UniProtKB-KW"/>
</dbReference>
<dbReference type="GO" id="GO:0005198">
    <property type="term" value="F:structural molecule activity"/>
    <property type="evidence" value="ECO:0007669"/>
    <property type="project" value="InterPro"/>
</dbReference>
<dbReference type="DisProt" id="DP00698"/>
<dbReference type="InterPro" id="IPR002021">
    <property type="entry name" value="Paramyx_ncap"/>
</dbReference>
<dbReference type="Pfam" id="PF00973">
    <property type="entry name" value="Paramyxo_ncap"/>
    <property type="match status" value="1"/>
</dbReference>
<reference key="1">
    <citation type="journal article" date="2000" name="J. Virol.">
        <title>The exceptionally large genome of Hendra virus: support for creation of a new genus within the family Paramyxoviridae.</title>
        <authorList>
            <person name="Wang L.-F."/>
            <person name="Yu M."/>
            <person name="Hansson E."/>
            <person name="Pritchard L.I."/>
            <person name="Shiell B."/>
            <person name="Michalski W.P."/>
            <person name="Eaton B.T."/>
        </authorList>
    </citation>
    <scope>NUCLEOTIDE SEQUENCE [GENOMIC RNA]</scope>
</reference>
<gene>
    <name type="primary">N</name>
</gene>
<evidence type="ECO:0000250" key="1"/>
<evidence type="ECO:0000250" key="2">
    <source>
        <dbReference type="UniProtKB" id="O57286"/>
    </source>
</evidence>
<evidence type="ECO:0000250" key="3">
    <source>
        <dbReference type="UniProtKB" id="P06159"/>
    </source>
</evidence>
<evidence type="ECO:0000250" key="4">
    <source>
        <dbReference type="UniProtKB" id="Q07097"/>
    </source>
</evidence>
<evidence type="ECO:0000256" key="5">
    <source>
        <dbReference type="SAM" id="MobiDB-lite"/>
    </source>
</evidence>
<evidence type="ECO:0000305" key="6"/>
<accession>O89339</accession>
<protein>
    <recommendedName>
        <fullName>Nucleoprotein</fullName>
        <shortName>Protein N</shortName>
    </recommendedName>
    <alternativeName>
        <fullName>Nucleocapsid protein</fullName>
    </alternativeName>
</protein>